<dbReference type="EC" id="5.3.1.23" evidence="1"/>
<dbReference type="EMBL" id="CH981524">
    <property type="protein sequence ID" value="EDK42982.1"/>
    <property type="molecule type" value="Genomic_DNA"/>
</dbReference>
<dbReference type="RefSeq" id="XP_001528640.1">
    <property type="nucleotide sequence ID" value="XM_001528590.1"/>
</dbReference>
<dbReference type="SMR" id="A5DUX4"/>
<dbReference type="FunCoup" id="A5DUX4">
    <property type="interactions" value="695"/>
</dbReference>
<dbReference type="STRING" id="379508.A5DUX4"/>
<dbReference type="GeneID" id="5235487"/>
<dbReference type="KEGG" id="lel:PVL30_001128"/>
<dbReference type="eggNOG" id="KOG1468">
    <property type="taxonomic scope" value="Eukaryota"/>
</dbReference>
<dbReference type="HOGENOM" id="CLU_016218_1_3_1"/>
<dbReference type="InParanoid" id="A5DUX4"/>
<dbReference type="OMA" id="CETRPLN"/>
<dbReference type="OrthoDB" id="2461at2759"/>
<dbReference type="UniPathway" id="UPA00904">
    <property type="reaction ID" value="UER00874"/>
</dbReference>
<dbReference type="Proteomes" id="UP000001996">
    <property type="component" value="Unassembled WGS sequence"/>
</dbReference>
<dbReference type="GO" id="GO:0005737">
    <property type="term" value="C:cytoplasm"/>
    <property type="evidence" value="ECO:0007669"/>
    <property type="project" value="UniProtKB-SubCell"/>
</dbReference>
<dbReference type="GO" id="GO:0005634">
    <property type="term" value="C:nucleus"/>
    <property type="evidence" value="ECO:0007669"/>
    <property type="project" value="UniProtKB-SubCell"/>
</dbReference>
<dbReference type="GO" id="GO:0046523">
    <property type="term" value="F:S-methyl-5-thioribose-1-phosphate isomerase activity"/>
    <property type="evidence" value="ECO:0007669"/>
    <property type="project" value="UniProtKB-UniRule"/>
</dbReference>
<dbReference type="GO" id="GO:0019509">
    <property type="term" value="P:L-methionine salvage from methylthioadenosine"/>
    <property type="evidence" value="ECO:0007669"/>
    <property type="project" value="UniProtKB-UniRule"/>
</dbReference>
<dbReference type="FunFam" id="1.20.120.420:FF:000003">
    <property type="entry name" value="Methylthioribose-1-phosphate isomerase"/>
    <property type="match status" value="1"/>
</dbReference>
<dbReference type="FunFam" id="3.40.50.10470:FF:000006">
    <property type="entry name" value="Methylthioribose-1-phosphate isomerase"/>
    <property type="match status" value="1"/>
</dbReference>
<dbReference type="Gene3D" id="1.20.120.420">
    <property type="entry name" value="translation initiation factor eif-2b, domain 1"/>
    <property type="match status" value="1"/>
</dbReference>
<dbReference type="Gene3D" id="3.40.50.10470">
    <property type="entry name" value="Translation initiation factor eif-2b, domain 2"/>
    <property type="match status" value="1"/>
</dbReference>
<dbReference type="HAMAP" id="MF_01678">
    <property type="entry name" value="Salvage_MtnA"/>
    <property type="match status" value="1"/>
</dbReference>
<dbReference type="InterPro" id="IPR000649">
    <property type="entry name" value="IF-2B-related"/>
</dbReference>
<dbReference type="InterPro" id="IPR005251">
    <property type="entry name" value="IF-M1Pi"/>
</dbReference>
<dbReference type="InterPro" id="IPR042529">
    <property type="entry name" value="IF_2B-like_C"/>
</dbReference>
<dbReference type="InterPro" id="IPR011559">
    <property type="entry name" value="Initiation_fac_2B_a/b/d"/>
</dbReference>
<dbReference type="InterPro" id="IPR027363">
    <property type="entry name" value="M1Pi_N"/>
</dbReference>
<dbReference type="InterPro" id="IPR037171">
    <property type="entry name" value="NagB/RpiA_transferase-like"/>
</dbReference>
<dbReference type="NCBIfam" id="TIGR00524">
    <property type="entry name" value="eIF-2B_rel"/>
    <property type="match status" value="1"/>
</dbReference>
<dbReference type="NCBIfam" id="NF004326">
    <property type="entry name" value="PRK05720.1"/>
    <property type="match status" value="1"/>
</dbReference>
<dbReference type="NCBIfam" id="TIGR00512">
    <property type="entry name" value="salvage_mtnA"/>
    <property type="match status" value="1"/>
</dbReference>
<dbReference type="PANTHER" id="PTHR43475">
    <property type="entry name" value="METHYLTHIORIBOSE-1-PHOSPHATE ISOMERASE"/>
    <property type="match status" value="1"/>
</dbReference>
<dbReference type="PANTHER" id="PTHR43475:SF1">
    <property type="entry name" value="METHYLTHIORIBOSE-1-PHOSPHATE ISOMERASE"/>
    <property type="match status" value="1"/>
</dbReference>
<dbReference type="Pfam" id="PF01008">
    <property type="entry name" value="IF-2B"/>
    <property type="match status" value="1"/>
</dbReference>
<dbReference type="SUPFAM" id="SSF100950">
    <property type="entry name" value="NagB/RpiA/CoA transferase-like"/>
    <property type="match status" value="1"/>
</dbReference>
<proteinExistence type="inferred from homology"/>
<keyword id="KW-0028">Amino-acid biosynthesis</keyword>
<keyword id="KW-0963">Cytoplasm</keyword>
<keyword id="KW-0413">Isomerase</keyword>
<keyword id="KW-0486">Methionine biosynthesis</keyword>
<keyword id="KW-0539">Nucleus</keyword>
<keyword id="KW-1185">Reference proteome</keyword>
<sequence>MSKESRTLQAIKFDRQNVTLDILDQLVLPYSTTYISIKSIDDAYNAIKSMQVRGAPAIAIVGAFAIVVDIYNNLKSKDGNSSIGDLQTSLQHLLRSRPTAVNLANAINDIEQILCSYETSEVLNESIYKQIFDYATRLYDDDLANNHKIGENGLKYIVESLKQENFKGPFSIITICNTGSLATSGHGTALGIIRSTYAKLHKEVSGEDFFLDHVYPCETRPYNQGAKLTTYELDYEKIPFTLICDNMVSSLIQTLKNEKKDVHGKTSPVKFIIVGADRIVRNGDAANKIGTFQLATIAQYFNSAQDTKIKFIVAAPRTTIDLNTETGDEIKIEERPHKELTTLVGPVLNGLEVGDKITVGIATPGITVWNPAFDVTPHGLIDSIITEDPIAYVKDKNGNYNLT</sequence>
<reference key="1">
    <citation type="journal article" date="2009" name="Nature">
        <title>Evolution of pathogenicity and sexual reproduction in eight Candida genomes.</title>
        <authorList>
            <person name="Butler G."/>
            <person name="Rasmussen M.D."/>
            <person name="Lin M.F."/>
            <person name="Santos M.A.S."/>
            <person name="Sakthikumar S."/>
            <person name="Munro C.A."/>
            <person name="Rheinbay E."/>
            <person name="Grabherr M."/>
            <person name="Forche A."/>
            <person name="Reedy J.L."/>
            <person name="Agrafioti I."/>
            <person name="Arnaud M.B."/>
            <person name="Bates S."/>
            <person name="Brown A.J.P."/>
            <person name="Brunke S."/>
            <person name="Costanzo M.C."/>
            <person name="Fitzpatrick D.A."/>
            <person name="de Groot P.W.J."/>
            <person name="Harris D."/>
            <person name="Hoyer L.L."/>
            <person name="Hube B."/>
            <person name="Klis F.M."/>
            <person name="Kodira C."/>
            <person name="Lennard N."/>
            <person name="Logue M.E."/>
            <person name="Martin R."/>
            <person name="Neiman A.M."/>
            <person name="Nikolaou E."/>
            <person name="Quail M.A."/>
            <person name="Quinn J."/>
            <person name="Santos M.C."/>
            <person name="Schmitzberger F.F."/>
            <person name="Sherlock G."/>
            <person name="Shah P."/>
            <person name="Silverstein K.A.T."/>
            <person name="Skrzypek M.S."/>
            <person name="Soll D."/>
            <person name="Staggs R."/>
            <person name="Stansfield I."/>
            <person name="Stumpf M.P.H."/>
            <person name="Sudbery P.E."/>
            <person name="Srikantha T."/>
            <person name="Zeng Q."/>
            <person name="Berman J."/>
            <person name="Berriman M."/>
            <person name="Heitman J."/>
            <person name="Gow N.A.R."/>
            <person name="Lorenz M.C."/>
            <person name="Birren B.W."/>
            <person name="Kellis M."/>
            <person name="Cuomo C.A."/>
        </authorList>
    </citation>
    <scope>NUCLEOTIDE SEQUENCE [LARGE SCALE GENOMIC DNA]</scope>
    <source>
        <strain>ATCC 11503 / BCRC 21390 / CBS 2605 / JCM 1781 / NBRC 1676 / NRRL YB-4239</strain>
    </source>
</reference>
<gene>
    <name evidence="1" type="primary">MRI1</name>
    <name type="ORF">LELG_01160</name>
</gene>
<evidence type="ECO:0000255" key="1">
    <source>
        <dbReference type="HAMAP-Rule" id="MF_03119"/>
    </source>
</evidence>
<protein>
    <recommendedName>
        <fullName evidence="1">Methylthioribose-1-phosphate isomerase</fullName>
        <shortName evidence="1">M1Pi</shortName>
        <shortName evidence="1">MTR-1-P isomerase</shortName>
        <ecNumber evidence="1">5.3.1.23</ecNumber>
    </recommendedName>
    <alternativeName>
        <fullName evidence="1">S-methyl-5-thioribose-1-phosphate isomerase</fullName>
    </alternativeName>
    <alternativeName>
        <fullName evidence="1">Translation initiation factor eIF-2B subunit alpha/beta/delta-like protein</fullName>
    </alternativeName>
</protein>
<feature type="chain" id="PRO_0000402032" description="Methylthioribose-1-phosphate isomerase">
    <location>
        <begin position="1"/>
        <end position="403"/>
    </location>
</feature>
<feature type="active site" description="Proton donor" evidence="1">
    <location>
        <position position="277"/>
    </location>
</feature>
<feature type="site" description="Transition state stabilizer" evidence="1">
    <location>
        <position position="176"/>
    </location>
</feature>
<name>MTNA_LODEL</name>
<comment type="function">
    <text evidence="1">Catalyzes the interconversion of methylthioribose-1-phosphate (MTR-1-P) into methylthioribulose-1-phosphate (MTRu-1-P).</text>
</comment>
<comment type="catalytic activity">
    <reaction evidence="1">
        <text>5-(methylsulfanyl)-alpha-D-ribose 1-phosphate = 5-(methylsulfanyl)-D-ribulose 1-phosphate</text>
        <dbReference type="Rhea" id="RHEA:19989"/>
        <dbReference type="ChEBI" id="CHEBI:58533"/>
        <dbReference type="ChEBI" id="CHEBI:58548"/>
        <dbReference type="EC" id="5.3.1.23"/>
    </reaction>
</comment>
<comment type="pathway">
    <text evidence="1">Amino-acid biosynthesis; L-methionine biosynthesis via salvage pathway; L-methionine from S-methyl-5-thio-alpha-D-ribose 1-phosphate: step 1/6.</text>
</comment>
<comment type="subcellular location">
    <subcellularLocation>
        <location evidence="1">Cytoplasm</location>
    </subcellularLocation>
    <subcellularLocation>
        <location evidence="1">Nucleus</location>
    </subcellularLocation>
</comment>
<comment type="similarity">
    <text evidence="1">Belongs to the eIF-2B alpha/beta/delta subunits family. MtnA subfamily.</text>
</comment>
<accession>A5DUX4</accession>
<organism>
    <name type="scientific">Lodderomyces elongisporus (strain ATCC 11503 / CBS 2605 / JCM 1781 / NBRC 1676 / NRRL YB-4239)</name>
    <name type="common">Yeast</name>
    <name type="synonym">Saccharomyces elongisporus</name>
    <dbReference type="NCBI Taxonomy" id="379508"/>
    <lineage>
        <taxon>Eukaryota</taxon>
        <taxon>Fungi</taxon>
        <taxon>Dikarya</taxon>
        <taxon>Ascomycota</taxon>
        <taxon>Saccharomycotina</taxon>
        <taxon>Pichiomycetes</taxon>
        <taxon>Debaryomycetaceae</taxon>
        <taxon>Candida/Lodderomyces clade</taxon>
        <taxon>Lodderomyces</taxon>
    </lineage>
</organism>